<reference key="1">
    <citation type="submission" date="2007-02" db="EMBL/GenBank/DDBJ databases">
        <title>Complete sequence of chromosome of Yersinia pestis Pestoides F.</title>
        <authorList>
            <consortium name="US DOE Joint Genome Institute"/>
            <person name="Copeland A."/>
            <person name="Lucas S."/>
            <person name="Lapidus A."/>
            <person name="Barry K."/>
            <person name="Detter J.C."/>
            <person name="Glavina del Rio T."/>
            <person name="Hammon N."/>
            <person name="Israni S."/>
            <person name="Dalin E."/>
            <person name="Tice H."/>
            <person name="Pitluck S."/>
            <person name="Di Bartolo G."/>
            <person name="Chain P."/>
            <person name="Malfatti S."/>
            <person name="Shin M."/>
            <person name="Vergez L."/>
            <person name="Schmutz J."/>
            <person name="Larimer F."/>
            <person name="Land M."/>
            <person name="Hauser L."/>
            <person name="Worsham P."/>
            <person name="Chu M."/>
            <person name="Bearden S."/>
            <person name="Garcia E."/>
            <person name="Richardson P."/>
        </authorList>
    </citation>
    <scope>NUCLEOTIDE SEQUENCE [LARGE SCALE GENOMIC DNA]</scope>
    <source>
        <strain>Pestoides F</strain>
    </source>
</reference>
<name>RF3_YERPP</name>
<accession>A4TQJ9</accession>
<gene>
    <name evidence="1" type="primary">prfC</name>
    <name type="ordered locus">YPDSF_3203</name>
</gene>
<sequence length="529" mass="59640">MSPSEYALEVAKRRTFAIISHPDAGKTTITEKVLLFGHAIQTAGTVKGRGSSHHAKSDWMEMEKQRGISITTSVMQFPYGGCLVNLLDTPGHEDFSEDTYRTLTAVDCCLMVIDAAKGVEDRTRKLMEVTRLRDTPILTFMNKLDREIRDPMEVLDEVERELNIACSPITWPIGCGKSFKGVYHLHKDETYLYQSGKGHTIQEVRIVKGLNNPDLDVAVGEDLAKQFRQELELVQGASHEFDHEAFLSGDLTPVFFGTALGNFGVDHMLDGLVEWAPAPMPRKTDTRVVVASEEKFTGFVFKIQANMDPKHRDRVAFMRVVSGRFEKGMKLRQVRTKKDVVISDALTFMAGDRSHVEEAYAGDIIGLHNHGTIQIGDTFTQGEDMKFTGIPNFAPELFRRIRLRDPLKQKQLLKGLVQLSEEGAVQVFRPLSNNDLIVGAVGVLQFEVVSSRLKSEYNVEAVYESVNVSTARWVECHDVKKFEEFKRKNELNLALDGGDNLSYIAPTMVNLNITQERYPDVIFRKTREH</sequence>
<evidence type="ECO:0000255" key="1">
    <source>
        <dbReference type="HAMAP-Rule" id="MF_00072"/>
    </source>
</evidence>
<keyword id="KW-0963">Cytoplasm</keyword>
<keyword id="KW-0342">GTP-binding</keyword>
<keyword id="KW-0547">Nucleotide-binding</keyword>
<keyword id="KW-0648">Protein biosynthesis</keyword>
<organism>
    <name type="scientific">Yersinia pestis (strain Pestoides F)</name>
    <dbReference type="NCBI Taxonomy" id="386656"/>
    <lineage>
        <taxon>Bacteria</taxon>
        <taxon>Pseudomonadati</taxon>
        <taxon>Pseudomonadota</taxon>
        <taxon>Gammaproteobacteria</taxon>
        <taxon>Enterobacterales</taxon>
        <taxon>Yersiniaceae</taxon>
        <taxon>Yersinia</taxon>
    </lineage>
</organism>
<proteinExistence type="inferred from homology"/>
<dbReference type="EMBL" id="CP000668">
    <property type="protein sequence ID" value="ABP41561.1"/>
    <property type="molecule type" value="Genomic_DNA"/>
</dbReference>
<dbReference type="RefSeq" id="WP_002209209.1">
    <property type="nucleotide sequence ID" value="NZ_CP009715.1"/>
</dbReference>
<dbReference type="SMR" id="A4TQJ9"/>
<dbReference type="GeneID" id="57974180"/>
<dbReference type="KEGG" id="ypp:YPDSF_3203"/>
<dbReference type="PATRIC" id="fig|386656.14.peg.1144"/>
<dbReference type="GO" id="GO:0005829">
    <property type="term" value="C:cytosol"/>
    <property type="evidence" value="ECO:0007669"/>
    <property type="project" value="TreeGrafter"/>
</dbReference>
<dbReference type="GO" id="GO:0005525">
    <property type="term" value="F:GTP binding"/>
    <property type="evidence" value="ECO:0007669"/>
    <property type="project" value="UniProtKB-UniRule"/>
</dbReference>
<dbReference type="GO" id="GO:0003924">
    <property type="term" value="F:GTPase activity"/>
    <property type="evidence" value="ECO:0007669"/>
    <property type="project" value="InterPro"/>
</dbReference>
<dbReference type="GO" id="GO:0097216">
    <property type="term" value="F:guanosine tetraphosphate binding"/>
    <property type="evidence" value="ECO:0007669"/>
    <property type="project" value="UniProtKB-ARBA"/>
</dbReference>
<dbReference type="GO" id="GO:0016150">
    <property type="term" value="F:translation release factor activity, codon nonspecific"/>
    <property type="evidence" value="ECO:0007669"/>
    <property type="project" value="TreeGrafter"/>
</dbReference>
<dbReference type="GO" id="GO:0016149">
    <property type="term" value="F:translation release factor activity, codon specific"/>
    <property type="evidence" value="ECO:0007669"/>
    <property type="project" value="UniProtKB-UniRule"/>
</dbReference>
<dbReference type="GO" id="GO:0006449">
    <property type="term" value="P:regulation of translational termination"/>
    <property type="evidence" value="ECO:0007669"/>
    <property type="project" value="UniProtKB-UniRule"/>
</dbReference>
<dbReference type="CDD" id="cd04169">
    <property type="entry name" value="RF3"/>
    <property type="match status" value="1"/>
</dbReference>
<dbReference type="CDD" id="cd03689">
    <property type="entry name" value="RF3_II"/>
    <property type="match status" value="1"/>
</dbReference>
<dbReference type="CDD" id="cd16259">
    <property type="entry name" value="RF3_III"/>
    <property type="match status" value="1"/>
</dbReference>
<dbReference type="FunFam" id="2.40.30.10:FF:000040">
    <property type="entry name" value="Peptide chain release factor 3"/>
    <property type="match status" value="1"/>
</dbReference>
<dbReference type="FunFam" id="3.30.70.3280:FF:000001">
    <property type="entry name" value="Peptide chain release factor 3"/>
    <property type="match status" value="1"/>
</dbReference>
<dbReference type="FunFam" id="3.40.50.300:FF:000542">
    <property type="entry name" value="Peptide chain release factor 3"/>
    <property type="match status" value="1"/>
</dbReference>
<dbReference type="Gene3D" id="3.40.50.300">
    <property type="entry name" value="P-loop containing nucleotide triphosphate hydrolases"/>
    <property type="match status" value="2"/>
</dbReference>
<dbReference type="Gene3D" id="3.30.70.3280">
    <property type="entry name" value="Peptide chain release factor 3, domain III"/>
    <property type="match status" value="1"/>
</dbReference>
<dbReference type="HAMAP" id="MF_00072">
    <property type="entry name" value="Rel_fac_3"/>
    <property type="match status" value="1"/>
</dbReference>
<dbReference type="InterPro" id="IPR053905">
    <property type="entry name" value="EF-G-like_DII"/>
</dbReference>
<dbReference type="InterPro" id="IPR035647">
    <property type="entry name" value="EFG_III/V"/>
</dbReference>
<dbReference type="InterPro" id="IPR031157">
    <property type="entry name" value="G_TR_CS"/>
</dbReference>
<dbReference type="InterPro" id="IPR027417">
    <property type="entry name" value="P-loop_NTPase"/>
</dbReference>
<dbReference type="InterPro" id="IPR004548">
    <property type="entry name" value="PrfC"/>
</dbReference>
<dbReference type="InterPro" id="IPR032090">
    <property type="entry name" value="RF3_C"/>
</dbReference>
<dbReference type="InterPro" id="IPR038467">
    <property type="entry name" value="RF3_dom_3_sf"/>
</dbReference>
<dbReference type="InterPro" id="IPR041732">
    <property type="entry name" value="RF3_GTP-bd"/>
</dbReference>
<dbReference type="InterPro" id="IPR005225">
    <property type="entry name" value="Small_GTP-bd"/>
</dbReference>
<dbReference type="InterPro" id="IPR000795">
    <property type="entry name" value="T_Tr_GTP-bd_dom"/>
</dbReference>
<dbReference type="InterPro" id="IPR009000">
    <property type="entry name" value="Transl_B-barrel_sf"/>
</dbReference>
<dbReference type="NCBIfam" id="TIGR00503">
    <property type="entry name" value="prfC"/>
    <property type="match status" value="1"/>
</dbReference>
<dbReference type="NCBIfam" id="NF001964">
    <property type="entry name" value="PRK00741.1"/>
    <property type="match status" value="1"/>
</dbReference>
<dbReference type="NCBIfam" id="TIGR00231">
    <property type="entry name" value="small_GTP"/>
    <property type="match status" value="1"/>
</dbReference>
<dbReference type="PANTHER" id="PTHR43556">
    <property type="entry name" value="PEPTIDE CHAIN RELEASE FACTOR RF3"/>
    <property type="match status" value="1"/>
</dbReference>
<dbReference type="PANTHER" id="PTHR43556:SF2">
    <property type="entry name" value="PEPTIDE CHAIN RELEASE FACTOR RF3"/>
    <property type="match status" value="1"/>
</dbReference>
<dbReference type="Pfam" id="PF22042">
    <property type="entry name" value="EF-G_D2"/>
    <property type="match status" value="1"/>
</dbReference>
<dbReference type="Pfam" id="PF00009">
    <property type="entry name" value="GTP_EFTU"/>
    <property type="match status" value="1"/>
</dbReference>
<dbReference type="Pfam" id="PF16658">
    <property type="entry name" value="RF3_C"/>
    <property type="match status" value="1"/>
</dbReference>
<dbReference type="PRINTS" id="PR00315">
    <property type="entry name" value="ELONGATNFCT"/>
</dbReference>
<dbReference type="SUPFAM" id="SSF54980">
    <property type="entry name" value="EF-G C-terminal domain-like"/>
    <property type="match status" value="1"/>
</dbReference>
<dbReference type="SUPFAM" id="SSF52540">
    <property type="entry name" value="P-loop containing nucleoside triphosphate hydrolases"/>
    <property type="match status" value="1"/>
</dbReference>
<dbReference type="SUPFAM" id="SSF50447">
    <property type="entry name" value="Translation proteins"/>
    <property type="match status" value="1"/>
</dbReference>
<dbReference type="PROSITE" id="PS00301">
    <property type="entry name" value="G_TR_1"/>
    <property type="match status" value="1"/>
</dbReference>
<dbReference type="PROSITE" id="PS51722">
    <property type="entry name" value="G_TR_2"/>
    <property type="match status" value="1"/>
</dbReference>
<protein>
    <recommendedName>
        <fullName evidence="1">Peptide chain release factor 3</fullName>
        <shortName evidence="1">RF-3</shortName>
    </recommendedName>
</protein>
<feature type="chain" id="PRO_1000023699" description="Peptide chain release factor 3">
    <location>
        <begin position="1"/>
        <end position="529"/>
    </location>
</feature>
<feature type="domain" description="tr-type G">
    <location>
        <begin position="11"/>
        <end position="280"/>
    </location>
</feature>
<feature type="binding site" evidence="1">
    <location>
        <begin position="20"/>
        <end position="27"/>
    </location>
    <ligand>
        <name>GTP</name>
        <dbReference type="ChEBI" id="CHEBI:37565"/>
    </ligand>
</feature>
<feature type="binding site" evidence="1">
    <location>
        <begin position="88"/>
        <end position="92"/>
    </location>
    <ligand>
        <name>GTP</name>
        <dbReference type="ChEBI" id="CHEBI:37565"/>
    </ligand>
</feature>
<feature type="binding site" evidence="1">
    <location>
        <begin position="142"/>
        <end position="145"/>
    </location>
    <ligand>
        <name>GTP</name>
        <dbReference type="ChEBI" id="CHEBI:37565"/>
    </ligand>
</feature>
<comment type="function">
    <text evidence="1">Increases the formation of ribosomal termination complexes and stimulates activities of RF-1 and RF-2. It binds guanine nucleotides and has strong preference for UGA stop codons. It may interact directly with the ribosome. The stimulation of RF-1 and RF-2 is significantly reduced by GTP and GDP, but not by GMP.</text>
</comment>
<comment type="subcellular location">
    <subcellularLocation>
        <location evidence="1">Cytoplasm</location>
    </subcellularLocation>
</comment>
<comment type="similarity">
    <text evidence="1">Belongs to the TRAFAC class translation factor GTPase superfamily. Classic translation factor GTPase family. PrfC subfamily.</text>
</comment>